<proteinExistence type="inferred from homology"/>
<feature type="chain" id="PRO_1000190900" description="Ketol-acid reductoisomerase (NADP(+))">
    <location>
        <begin position="1"/>
        <end position="339"/>
    </location>
</feature>
<feature type="domain" description="KARI N-terminal Rossmann" evidence="2">
    <location>
        <begin position="1"/>
        <end position="182"/>
    </location>
</feature>
<feature type="domain" description="KARI C-terminal knotted" evidence="3">
    <location>
        <begin position="183"/>
        <end position="328"/>
    </location>
</feature>
<feature type="active site" evidence="1">
    <location>
        <position position="108"/>
    </location>
</feature>
<feature type="binding site" evidence="1">
    <location>
        <begin position="24"/>
        <end position="27"/>
    </location>
    <ligand>
        <name>NADP(+)</name>
        <dbReference type="ChEBI" id="CHEBI:58349"/>
    </ligand>
</feature>
<feature type="binding site" evidence="1">
    <location>
        <position position="48"/>
    </location>
    <ligand>
        <name>NADP(+)</name>
        <dbReference type="ChEBI" id="CHEBI:58349"/>
    </ligand>
</feature>
<feature type="binding site" evidence="1">
    <location>
        <position position="51"/>
    </location>
    <ligand>
        <name>NADP(+)</name>
        <dbReference type="ChEBI" id="CHEBI:58349"/>
    </ligand>
</feature>
<feature type="binding site" evidence="1">
    <location>
        <position position="53"/>
    </location>
    <ligand>
        <name>NADP(+)</name>
        <dbReference type="ChEBI" id="CHEBI:58349"/>
    </ligand>
</feature>
<feature type="binding site" evidence="1">
    <location>
        <begin position="83"/>
        <end position="86"/>
    </location>
    <ligand>
        <name>NADP(+)</name>
        <dbReference type="ChEBI" id="CHEBI:58349"/>
    </ligand>
</feature>
<feature type="binding site" evidence="1">
    <location>
        <position position="134"/>
    </location>
    <ligand>
        <name>NADP(+)</name>
        <dbReference type="ChEBI" id="CHEBI:58349"/>
    </ligand>
</feature>
<feature type="binding site" evidence="1">
    <location>
        <position position="191"/>
    </location>
    <ligand>
        <name>Mg(2+)</name>
        <dbReference type="ChEBI" id="CHEBI:18420"/>
        <label>1</label>
    </ligand>
</feature>
<feature type="binding site" evidence="1">
    <location>
        <position position="191"/>
    </location>
    <ligand>
        <name>Mg(2+)</name>
        <dbReference type="ChEBI" id="CHEBI:18420"/>
        <label>2</label>
    </ligand>
</feature>
<feature type="binding site" evidence="1">
    <location>
        <position position="195"/>
    </location>
    <ligand>
        <name>Mg(2+)</name>
        <dbReference type="ChEBI" id="CHEBI:18420"/>
        <label>1</label>
    </ligand>
</feature>
<feature type="binding site" evidence="1">
    <location>
        <position position="227"/>
    </location>
    <ligand>
        <name>Mg(2+)</name>
        <dbReference type="ChEBI" id="CHEBI:18420"/>
        <label>2</label>
    </ligand>
</feature>
<feature type="binding site" evidence="1">
    <location>
        <position position="231"/>
    </location>
    <ligand>
        <name>Mg(2+)</name>
        <dbReference type="ChEBI" id="CHEBI:18420"/>
        <label>2</label>
    </ligand>
</feature>
<feature type="binding site" evidence="1">
    <location>
        <position position="252"/>
    </location>
    <ligand>
        <name>substrate</name>
    </ligand>
</feature>
<reference key="1">
    <citation type="journal article" date="2009" name="J. Bacteriol.">
        <title>Genome sequences of three Agrobacterium biovars help elucidate the evolution of multichromosome genomes in bacteria.</title>
        <authorList>
            <person name="Slater S.C."/>
            <person name="Goldman B.S."/>
            <person name="Goodner B."/>
            <person name="Setubal J.C."/>
            <person name="Farrand S.K."/>
            <person name="Nester E.W."/>
            <person name="Burr T.J."/>
            <person name="Banta L."/>
            <person name="Dickerman A.W."/>
            <person name="Paulsen I."/>
            <person name="Otten L."/>
            <person name="Suen G."/>
            <person name="Welch R."/>
            <person name="Almeida N.F."/>
            <person name="Arnold F."/>
            <person name="Burton O.T."/>
            <person name="Du Z."/>
            <person name="Ewing A."/>
            <person name="Godsy E."/>
            <person name="Heisel S."/>
            <person name="Houmiel K.L."/>
            <person name="Jhaveri J."/>
            <person name="Lu J."/>
            <person name="Miller N.M."/>
            <person name="Norton S."/>
            <person name="Chen Q."/>
            <person name="Phoolcharoen W."/>
            <person name="Ohlin V."/>
            <person name="Ondrusek D."/>
            <person name="Pride N."/>
            <person name="Stricklin S.L."/>
            <person name="Sun J."/>
            <person name="Wheeler C."/>
            <person name="Wilson L."/>
            <person name="Zhu H."/>
            <person name="Wood D.W."/>
        </authorList>
    </citation>
    <scope>NUCLEOTIDE SEQUENCE [LARGE SCALE GENOMIC DNA]</scope>
    <source>
        <strain>ATCC BAA-846 / DSM 112012 / S4</strain>
    </source>
</reference>
<organism>
    <name type="scientific">Allorhizobium ampelinum (strain ATCC BAA-846 / DSM 112012 / S4)</name>
    <name type="common">Agrobacterium vitis (strain S4)</name>
    <dbReference type="NCBI Taxonomy" id="311402"/>
    <lineage>
        <taxon>Bacteria</taxon>
        <taxon>Pseudomonadati</taxon>
        <taxon>Pseudomonadota</taxon>
        <taxon>Alphaproteobacteria</taxon>
        <taxon>Hyphomicrobiales</taxon>
        <taxon>Rhizobiaceae</taxon>
        <taxon>Rhizobium/Agrobacterium group</taxon>
        <taxon>Allorhizobium</taxon>
        <taxon>Allorhizobium ampelinum</taxon>
    </lineage>
</organism>
<evidence type="ECO:0000255" key="1">
    <source>
        <dbReference type="HAMAP-Rule" id="MF_00435"/>
    </source>
</evidence>
<evidence type="ECO:0000255" key="2">
    <source>
        <dbReference type="PROSITE-ProRule" id="PRU01197"/>
    </source>
</evidence>
<evidence type="ECO:0000255" key="3">
    <source>
        <dbReference type="PROSITE-ProRule" id="PRU01198"/>
    </source>
</evidence>
<dbReference type="EC" id="1.1.1.86" evidence="1"/>
<dbReference type="EMBL" id="CP000633">
    <property type="protein sequence ID" value="ACM37003.1"/>
    <property type="molecule type" value="Genomic_DNA"/>
</dbReference>
<dbReference type="RefSeq" id="WP_015916424.1">
    <property type="nucleotide sequence ID" value="NC_011989.1"/>
</dbReference>
<dbReference type="SMR" id="B9JXM6"/>
<dbReference type="STRING" id="311402.Avi_2778"/>
<dbReference type="GeneID" id="60684951"/>
<dbReference type="KEGG" id="avi:Avi_2778"/>
<dbReference type="eggNOG" id="COG0059">
    <property type="taxonomic scope" value="Bacteria"/>
</dbReference>
<dbReference type="HOGENOM" id="CLU_033821_0_1_5"/>
<dbReference type="UniPathway" id="UPA00047">
    <property type="reaction ID" value="UER00056"/>
</dbReference>
<dbReference type="UniPathway" id="UPA00049">
    <property type="reaction ID" value="UER00060"/>
</dbReference>
<dbReference type="Proteomes" id="UP000001596">
    <property type="component" value="Chromosome 1"/>
</dbReference>
<dbReference type="GO" id="GO:0005829">
    <property type="term" value="C:cytosol"/>
    <property type="evidence" value="ECO:0007669"/>
    <property type="project" value="TreeGrafter"/>
</dbReference>
<dbReference type="GO" id="GO:0004455">
    <property type="term" value="F:ketol-acid reductoisomerase activity"/>
    <property type="evidence" value="ECO:0007669"/>
    <property type="project" value="UniProtKB-UniRule"/>
</dbReference>
<dbReference type="GO" id="GO:0000287">
    <property type="term" value="F:magnesium ion binding"/>
    <property type="evidence" value="ECO:0007669"/>
    <property type="project" value="UniProtKB-UniRule"/>
</dbReference>
<dbReference type="GO" id="GO:0050661">
    <property type="term" value="F:NADP binding"/>
    <property type="evidence" value="ECO:0007669"/>
    <property type="project" value="InterPro"/>
</dbReference>
<dbReference type="GO" id="GO:0009097">
    <property type="term" value="P:isoleucine biosynthetic process"/>
    <property type="evidence" value="ECO:0007669"/>
    <property type="project" value="UniProtKB-UniRule"/>
</dbReference>
<dbReference type="GO" id="GO:0009099">
    <property type="term" value="P:L-valine biosynthetic process"/>
    <property type="evidence" value="ECO:0007669"/>
    <property type="project" value="UniProtKB-UniRule"/>
</dbReference>
<dbReference type="FunFam" id="3.40.50.720:FF:000023">
    <property type="entry name" value="Ketol-acid reductoisomerase (NADP(+))"/>
    <property type="match status" value="1"/>
</dbReference>
<dbReference type="Gene3D" id="6.10.240.10">
    <property type="match status" value="1"/>
</dbReference>
<dbReference type="Gene3D" id="3.40.50.720">
    <property type="entry name" value="NAD(P)-binding Rossmann-like Domain"/>
    <property type="match status" value="1"/>
</dbReference>
<dbReference type="HAMAP" id="MF_00435">
    <property type="entry name" value="IlvC"/>
    <property type="match status" value="1"/>
</dbReference>
<dbReference type="InterPro" id="IPR008927">
    <property type="entry name" value="6-PGluconate_DH-like_C_sf"/>
</dbReference>
<dbReference type="InterPro" id="IPR013023">
    <property type="entry name" value="KARI"/>
</dbReference>
<dbReference type="InterPro" id="IPR000506">
    <property type="entry name" value="KARI_C"/>
</dbReference>
<dbReference type="InterPro" id="IPR013116">
    <property type="entry name" value="KARI_N"/>
</dbReference>
<dbReference type="InterPro" id="IPR014359">
    <property type="entry name" value="KARI_prok"/>
</dbReference>
<dbReference type="InterPro" id="IPR036291">
    <property type="entry name" value="NAD(P)-bd_dom_sf"/>
</dbReference>
<dbReference type="NCBIfam" id="TIGR00465">
    <property type="entry name" value="ilvC"/>
    <property type="match status" value="1"/>
</dbReference>
<dbReference type="NCBIfam" id="NF004017">
    <property type="entry name" value="PRK05479.1"/>
    <property type="match status" value="1"/>
</dbReference>
<dbReference type="NCBIfam" id="NF009940">
    <property type="entry name" value="PRK13403.1"/>
    <property type="match status" value="1"/>
</dbReference>
<dbReference type="PANTHER" id="PTHR21371">
    <property type="entry name" value="KETOL-ACID REDUCTOISOMERASE, MITOCHONDRIAL"/>
    <property type="match status" value="1"/>
</dbReference>
<dbReference type="PANTHER" id="PTHR21371:SF1">
    <property type="entry name" value="KETOL-ACID REDUCTOISOMERASE, MITOCHONDRIAL"/>
    <property type="match status" value="1"/>
</dbReference>
<dbReference type="Pfam" id="PF01450">
    <property type="entry name" value="KARI_C"/>
    <property type="match status" value="1"/>
</dbReference>
<dbReference type="Pfam" id="PF07991">
    <property type="entry name" value="KARI_N"/>
    <property type="match status" value="1"/>
</dbReference>
<dbReference type="PIRSF" id="PIRSF000116">
    <property type="entry name" value="IlvC_gammaproteo"/>
    <property type="match status" value="1"/>
</dbReference>
<dbReference type="SUPFAM" id="SSF48179">
    <property type="entry name" value="6-phosphogluconate dehydrogenase C-terminal domain-like"/>
    <property type="match status" value="1"/>
</dbReference>
<dbReference type="SUPFAM" id="SSF51735">
    <property type="entry name" value="NAD(P)-binding Rossmann-fold domains"/>
    <property type="match status" value="1"/>
</dbReference>
<dbReference type="PROSITE" id="PS51851">
    <property type="entry name" value="KARI_C"/>
    <property type="match status" value="1"/>
</dbReference>
<dbReference type="PROSITE" id="PS51850">
    <property type="entry name" value="KARI_N"/>
    <property type="match status" value="1"/>
</dbReference>
<keyword id="KW-0028">Amino-acid biosynthesis</keyword>
<keyword id="KW-0100">Branched-chain amino acid biosynthesis</keyword>
<keyword id="KW-0460">Magnesium</keyword>
<keyword id="KW-0479">Metal-binding</keyword>
<keyword id="KW-0521">NADP</keyword>
<keyword id="KW-0560">Oxidoreductase</keyword>
<keyword id="KW-1185">Reference proteome</keyword>
<comment type="function">
    <text evidence="1">Involved in the biosynthesis of branched-chain amino acids (BCAA). Catalyzes an alkyl-migration followed by a ketol-acid reduction of (S)-2-acetolactate (S2AL) to yield (R)-2,3-dihydroxy-isovalerate. In the isomerase reaction, S2AL is rearranged via a Mg-dependent methyl migration to produce 3-hydroxy-3-methyl-2-ketobutyrate (HMKB). In the reductase reaction, this 2-ketoacid undergoes a metal-dependent reduction by NADPH to yield (R)-2,3-dihydroxy-isovalerate.</text>
</comment>
<comment type="catalytic activity">
    <reaction evidence="1">
        <text>(2R)-2,3-dihydroxy-3-methylbutanoate + NADP(+) = (2S)-2-acetolactate + NADPH + H(+)</text>
        <dbReference type="Rhea" id="RHEA:22068"/>
        <dbReference type="ChEBI" id="CHEBI:15378"/>
        <dbReference type="ChEBI" id="CHEBI:49072"/>
        <dbReference type="ChEBI" id="CHEBI:57783"/>
        <dbReference type="ChEBI" id="CHEBI:58349"/>
        <dbReference type="ChEBI" id="CHEBI:58476"/>
        <dbReference type="EC" id="1.1.1.86"/>
    </reaction>
</comment>
<comment type="catalytic activity">
    <reaction evidence="1">
        <text>(2R,3R)-2,3-dihydroxy-3-methylpentanoate + NADP(+) = (S)-2-ethyl-2-hydroxy-3-oxobutanoate + NADPH + H(+)</text>
        <dbReference type="Rhea" id="RHEA:13493"/>
        <dbReference type="ChEBI" id="CHEBI:15378"/>
        <dbReference type="ChEBI" id="CHEBI:49256"/>
        <dbReference type="ChEBI" id="CHEBI:49258"/>
        <dbReference type="ChEBI" id="CHEBI:57783"/>
        <dbReference type="ChEBI" id="CHEBI:58349"/>
        <dbReference type="EC" id="1.1.1.86"/>
    </reaction>
</comment>
<comment type="cofactor">
    <cofactor evidence="1">
        <name>Mg(2+)</name>
        <dbReference type="ChEBI" id="CHEBI:18420"/>
    </cofactor>
    <text evidence="1">Binds 2 magnesium ions per subunit.</text>
</comment>
<comment type="pathway">
    <text evidence="1">Amino-acid biosynthesis; L-isoleucine biosynthesis; L-isoleucine from 2-oxobutanoate: step 2/4.</text>
</comment>
<comment type="pathway">
    <text evidence="1">Amino-acid biosynthesis; L-valine biosynthesis; L-valine from pyruvate: step 2/4.</text>
</comment>
<comment type="similarity">
    <text evidence="1">Belongs to the ketol-acid reductoisomerase family.</text>
</comment>
<accession>B9JXM6</accession>
<protein>
    <recommendedName>
        <fullName evidence="1">Ketol-acid reductoisomerase (NADP(+))</fullName>
        <shortName evidence="1">KARI</shortName>
        <ecNumber evidence="1">1.1.1.86</ecNumber>
    </recommendedName>
    <alternativeName>
        <fullName evidence="1">Acetohydroxy-acid isomeroreductase</fullName>
        <shortName evidence="1">AHIR</shortName>
    </alternativeName>
    <alternativeName>
        <fullName evidence="1">Alpha-keto-beta-hydroxylacyl reductoisomerase</fullName>
    </alternativeName>
    <alternativeName>
        <fullName evidence="1">Ketol-acid reductoisomerase type 1</fullName>
    </alternativeName>
    <alternativeName>
        <fullName evidence="1">Ketol-acid reductoisomerase type I</fullName>
    </alternativeName>
</protein>
<gene>
    <name evidence="1" type="primary">ilvC</name>
    <name type="ordered locus">Avi_2778</name>
</gene>
<name>ILVC_ALLAM</name>
<sequence length="339" mass="36687">MRVYYDRDADLNLIKAKKVAIIGYGSQGRAHALNLKDSGAQNVVIALKAGSATIAKAEADGFKVMTVAEAAAWADLMMMATPDELQADIYKADIAGNIRDGAAIAFAHGLNVHFGLIEPKNTVDVVMIAPKGPGHTVRGEYQKGGGVPCLVAIHQNASGNALEVALSYACGVGGGRSGIIETTFQEECETDLFGEQVVLCGGLVELIRAGFETLVEGGYAPEMAYFECLHEVKLIVDLIYEGGIANMNYSISNTAEWGEYVTGPRIITAETKAEMKRVLHDIQTGKFTSDWMQEYRAGAARFKGIRRMNDKHQIEEVGAKLRGMMPWIAKNQLVDKARN</sequence>